<protein>
    <recommendedName>
        <fullName evidence="1">Catalase-peroxidase</fullName>
        <shortName evidence="1">CP</shortName>
        <ecNumber evidence="1">1.11.1.21</ecNumber>
    </recommendedName>
    <alternativeName>
        <fullName evidence="1">Peroxidase/catalase</fullName>
    </alternativeName>
</protein>
<reference key="1">
    <citation type="submission" date="2008-05" db="EMBL/GenBank/DDBJ databases">
        <title>Complete sequence of Chlorobium limicola DSM 245.</title>
        <authorList>
            <consortium name="US DOE Joint Genome Institute"/>
            <person name="Lucas S."/>
            <person name="Copeland A."/>
            <person name="Lapidus A."/>
            <person name="Glavina del Rio T."/>
            <person name="Dalin E."/>
            <person name="Tice H."/>
            <person name="Bruce D."/>
            <person name="Goodwin L."/>
            <person name="Pitluck S."/>
            <person name="Schmutz J."/>
            <person name="Larimer F."/>
            <person name="Land M."/>
            <person name="Hauser L."/>
            <person name="Kyrpides N."/>
            <person name="Ovchinnikova G."/>
            <person name="Zhao F."/>
            <person name="Li T."/>
            <person name="Liu Z."/>
            <person name="Overmann J."/>
            <person name="Bryant D.A."/>
            <person name="Richardson P."/>
        </authorList>
    </citation>
    <scope>NUCLEOTIDE SEQUENCE [LARGE SCALE GENOMIC DNA]</scope>
    <source>
        <strain>DSM 245 / NBRC 103803 / 6330</strain>
    </source>
</reference>
<evidence type="ECO:0000255" key="1">
    <source>
        <dbReference type="HAMAP-Rule" id="MF_01961"/>
    </source>
</evidence>
<evidence type="ECO:0000256" key="2">
    <source>
        <dbReference type="SAM" id="MobiDB-lite"/>
    </source>
</evidence>
<sequence length="732" mass="81360">MSEQSKCPVTGRTAGHPVAGGGMSNRDWWPNQLPLDMLHQHSSLVNPMGEAFRYKEEFKKLDLGAVKKDLYALMTDSQEWWPADYGHYGGLFIRMAWHSAGTYRTSDGRGGGGTGNQRFAPLNSWPDNANLDKARRLLWPIKQKYGKMLSWADLMILAGNCALESMGFRTFGFGGGRVDIWEPEEDIYWGKEVEWLGSNRYSGERDLENPLAAVQMGLIYVNPEGPDGNPDPVAAGRDIRETFARMAMNDEETVALVAGGHTFGKCHGVGDPNLIGPEPEAAPIEEQGLGWKSGYGSGKGDETMTSGLEGAWTPDPIHWDMGYLGMLFKYEWELTKSPAGAWQWKPKDVAEEDLAPAAHDPSKRVPTMMTTADLAMRMDPIYGPISRRYYEHPDQFADAFARAWFKLTHRDMGPKSRYLGAEVPAEDLIWQDPVPAVDHELITEGEIAELKMRILASGLPIPELVSTAWASASTFRGSDKRGGANGARIRLAPQKEWEVNQPEQLQRVLHELEKIRDTFNGEQSGGKRVSLADLIVLGGCAAVEEAARRAGHDVTVPFAPGRTDASQAETDVESFAALEPLADGFRNYAKRKYSVTPEEMLIDRSQLLTLTAPEMTVLVGGLRVLGINFRQSPHGVFTRHPETLTNDFFVNLLDMGTEWKPVSHEHDTFEGRDRKTGEPSWSATRVDLIFGSNARLRAIAEVYGSDDAQEKFVHDFVAAWDKVMNLDRFDLS</sequence>
<proteinExistence type="inferred from homology"/>
<feature type="chain" id="PRO_0000354758" description="Catalase-peroxidase">
    <location>
        <begin position="1"/>
        <end position="732"/>
    </location>
</feature>
<feature type="region of interest" description="Disordered" evidence="2">
    <location>
        <begin position="1"/>
        <end position="23"/>
    </location>
</feature>
<feature type="active site" description="Proton acceptor" evidence="1">
    <location>
        <position position="98"/>
    </location>
</feature>
<feature type="binding site" description="axial binding residue" evidence="1">
    <location>
        <position position="261"/>
    </location>
    <ligand>
        <name>heme b</name>
        <dbReference type="ChEBI" id="CHEBI:60344"/>
    </ligand>
    <ligandPart>
        <name>Fe</name>
        <dbReference type="ChEBI" id="CHEBI:18248"/>
    </ligandPart>
</feature>
<feature type="site" description="Transition state stabilizer" evidence="1">
    <location>
        <position position="94"/>
    </location>
</feature>
<feature type="cross-link" description="Tryptophyl-tyrosyl-methioninium (Trp-Tyr) (with M-246)" evidence="1">
    <location>
        <begin position="97"/>
        <end position="220"/>
    </location>
</feature>
<feature type="cross-link" description="Tryptophyl-tyrosyl-methioninium (Tyr-Met) (with W-97)" evidence="1">
    <location>
        <begin position="220"/>
        <end position="246"/>
    </location>
</feature>
<keyword id="KW-0349">Heme</keyword>
<keyword id="KW-0376">Hydrogen peroxide</keyword>
<keyword id="KW-0408">Iron</keyword>
<keyword id="KW-0479">Metal-binding</keyword>
<keyword id="KW-0560">Oxidoreductase</keyword>
<keyword id="KW-0575">Peroxidase</keyword>
<accession>B3EEA0</accession>
<comment type="function">
    <text evidence="1">Bifunctional enzyme with both catalase and broad-spectrum peroxidase activity.</text>
</comment>
<comment type="catalytic activity">
    <reaction evidence="1">
        <text>H2O2 + AH2 = A + 2 H2O</text>
        <dbReference type="Rhea" id="RHEA:30275"/>
        <dbReference type="ChEBI" id="CHEBI:13193"/>
        <dbReference type="ChEBI" id="CHEBI:15377"/>
        <dbReference type="ChEBI" id="CHEBI:16240"/>
        <dbReference type="ChEBI" id="CHEBI:17499"/>
        <dbReference type="EC" id="1.11.1.21"/>
    </reaction>
</comment>
<comment type="catalytic activity">
    <reaction evidence="1">
        <text>2 H2O2 = O2 + 2 H2O</text>
        <dbReference type="Rhea" id="RHEA:20309"/>
        <dbReference type="ChEBI" id="CHEBI:15377"/>
        <dbReference type="ChEBI" id="CHEBI:15379"/>
        <dbReference type="ChEBI" id="CHEBI:16240"/>
        <dbReference type="EC" id="1.11.1.21"/>
    </reaction>
</comment>
<comment type="cofactor">
    <cofactor evidence="1">
        <name>heme b</name>
        <dbReference type="ChEBI" id="CHEBI:60344"/>
    </cofactor>
    <text evidence="1">Binds 1 heme b (iron(II)-protoporphyrin IX) group per dimer.</text>
</comment>
<comment type="subunit">
    <text evidence="1">Homodimer or homotetramer.</text>
</comment>
<comment type="PTM">
    <text evidence="1">Formation of the three residue Trp-Tyr-Met cross-link is important for the catalase, but not the peroxidase activity of the enzyme.</text>
</comment>
<comment type="similarity">
    <text evidence="1">Belongs to the peroxidase family. Peroxidase/catalase subfamily.</text>
</comment>
<organism>
    <name type="scientific">Chlorobium limicola (strain DSM 245 / NBRC 103803 / 6330)</name>
    <dbReference type="NCBI Taxonomy" id="290315"/>
    <lineage>
        <taxon>Bacteria</taxon>
        <taxon>Pseudomonadati</taxon>
        <taxon>Chlorobiota</taxon>
        <taxon>Chlorobiia</taxon>
        <taxon>Chlorobiales</taxon>
        <taxon>Chlorobiaceae</taxon>
        <taxon>Chlorobium/Pelodictyon group</taxon>
        <taxon>Chlorobium</taxon>
    </lineage>
</organism>
<dbReference type="EC" id="1.11.1.21" evidence="1"/>
<dbReference type="EMBL" id="CP001097">
    <property type="protein sequence ID" value="ACD89234.1"/>
    <property type="molecule type" value="Genomic_DNA"/>
</dbReference>
<dbReference type="RefSeq" id="WP_012465115.1">
    <property type="nucleotide sequence ID" value="NC_010803.1"/>
</dbReference>
<dbReference type="SMR" id="B3EEA0"/>
<dbReference type="STRING" id="290315.Clim_0134"/>
<dbReference type="KEGG" id="cli:Clim_0134"/>
<dbReference type="eggNOG" id="COG0376">
    <property type="taxonomic scope" value="Bacteria"/>
</dbReference>
<dbReference type="HOGENOM" id="CLU_025424_2_0_10"/>
<dbReference type="OrthoDB" id="9759743at2"/>
<dbReference type="Proteomes" id="UP000008841">
    <property type="component" value="Chromosome"/>
</dbReference>
<dbReference type="GO" id="GO:0005829">
    <property type="term" value="C:cytosol"/>
    <property type="evidence" value="ECO:0007669"/>
    <property type="project" value="TreeGrafter"/>
</dbReference>
<dbReference type="GO" id="GO:0004096">
    <property type="term" value="F:catalase activity"/>
    <property type="evidence" value="ECO:0007669"/>
    <property type="project" value="UniProtKB-UniRule"/>
</dbReference>
<dbReference type="GO" id="GO:0020037">
    <property type="term" value="F:heme binding"/>
    <property type="evidence" value="ECO:0007669"/>
    <property type="project" value="InterPro"/>
</dbReference>
<dbReference type="GO" id="GO:0046872">
    <property type="term" value="F:metal ion binding"/>
    <property type="evidence" value="ECO:0007669"/>
    <property type="project" value="UniProtKB-KW"/>
</dbReference>
<dbReference type="GO" id="GO:0070301">
    <property type="term" value="P:cellular response to hydrogen peroxide"/>
    <property type="evidence" value="ECO:0007669"/>
    <property type="project" value="TreeGrafter"/>
</dbReference>
<dbReference type="GO" id="GO:0042744">
    <property type="term" value="P:hydrogen peroxide catabolic process"/>
    <property type="evidence" value="ECO:0007669"/>
    <property type="project" value="UniProtKB-KW"/>
</dbReference>
<dbReference type="CDD" id="cd00649">
    <property type="entry name" value="catalase_peroxidase_1"/>
    <property type="match status" value="1"/>
</dbReference>
<dbReference type="CDD" id="cd08200">
    <property type="entry name" value="catalase_peroxidase_2"/>
    <property type="match status" value="1"/>
</dbReference>
<dbReference type="FunFam" id="1.10.420.10:FF:000002">
    <property type="entry name" value="Catalase-peroxidase"/>
    <property type="match status" value="1"/>
</dbReference>
<dbReference type="FunFam" id="1.10.420.10:FF:000004">
    <property type="entry name" value="Catalase-peroxidase"/>
    <property type="match status" value="1"/>
</dbReference>
<dbReference type="FunFam" id="1.10.520.10:FF:000002">
    <property type="entry name" value="Catalase-peroxidase"/>
    <property type="match status" value="1"/>
</dbReference>
<dbReference type="Gene3D" id="1.10.520.10">
    <property type="match status" value="2"/>
</dbReference>
<dbReference type="Gene3D" id="1.10.420.10">
    <property type="entry name" value="Peroxidase, domain 2"/>
    <property type="match status" value="2"/>
</dbReference>
<dbReference type="HAMAP" id="MF_01961">
    <property type="entry name" value="Catal_peroxid"/>
    <property type="match status" value="1"/>
</dbReference>
<dbReference type="InterPro" id="IPR000763">
    <property type="entry name" value="Catalase_peroxidase"/>
</dbReference>
<dbReference type="InterPro" id="IPR002016">
    <property type="entry name" value="Haem_peroxidase"/>
</dbReference>
<dbReference type="InterPro" id="IPR010255">
    <property type="entry name" value="Haem_peroxidase_sf"/>
</dbReference>
<dbReference type="InterPro" id="IPR019794">
    <property type="entry name" value="Peroxidases_AS"/>
</dbReference>
<dbReference type="InterPro" id="IPR019793">
    <property type="entry name" value="Peroxidases_heam-ligand_BS"/>
</dbReference>
<dbReference type="NCBIfam" id="TIGR00198">
    <property type="entry name" value="cat_per_HPI"/>
    <property type="match status" value="1"/>
</dbReference>
<dbReference type="NCBIfam" id="NF011635">
    <property type="entry name" value="PRK15061.1"/>
    <property type="match status" value="1"/>
</dbReference>
<dbReference type="PANTHER" id="PTHR30555:SF0">
    <property type="entry name" value="CATALASE-PEROXIDASE"/>
    <property type="match status" value="1"/>
</dbReference>
<dbReference type="PANTHER" id="PTHR30555">
    <property type="entry name" value="HYDROPEROXIDASE I, BIFUNCTIONAL CATALASE-PEROXIDASE"/>
    <property type="match status" value="1"/>
</dbReference>
<dbReference type="Pfam" id="PF00141">
    <property type="entry name" value="peroxidase"/>
    <property type="match status" value="2"/>
</dbReference>
<dbReference type="PRINTS" id="PR00460">
    <property type="entry name" value="BPEROXIDASE"/>
</dbReference>
<dbReference type="PRINTS" id="PR00458">
    <property type="entry name" value="PEROXIDASE"/>
</dbReference>
<dbReference type="SUPFAM" id="SSF48113">
    <property type="entry name" value="Heme-dependent peroxidases"/>
    <property type="match status" value="2"/>
</dbReference>
<dbReference type="PROSITE" id="PS00435">
    <property type="entry name" value="PEROXIDASE_1"/>
    <property type="match status" value="1"/>
</dbReference>
<dbReference type="PROSITE" id="PS00436">
    <property type="entry name" value="PEROXIDASE_2"/>
    <property type="match status" value="1"/>
</dbReference>
<dbReference type="PROSITE" id="PS50873">
    <property type="entry name" value="PEROXIDASE_4"/>
    <property type="match status" value="1"/>
</dbReference>
<name>KATG_CHLL2</name>
<gene>
    <name evidence="1" type="primary">katG</name>
    <name type="ordered locus">Clim_0134</name>
</gene>